<evidence type="ECO:0000255" key="1">
    <source>
        <dbReference type="HAMAP-Rule" id="MF_01443"/>
    </source>
</evidence>
<protein>
    <recommendedName>
        <fullName evidence="1">Bis(5'-nucleosyl)-tetraphosphatase PrpE [asymmetrical]</fullName>
        <ecNumber evidence="1">3.6.1.17</ecNumber>
    </recommendedName>
    <alternativeName>
        <fullName evidence="1">Ap4A hydrolase</fullName>
    </alternativeName>
    <alternativeName>
        <fullName evidence="1">Diadenosine 5',5'''-P1,P4-tetraphosphate asymmetrical hydrolase</fullName>
        <shortName evidence="1">Diadenosine tetraphosphatase</shortName>
    </alternativeName>
</protein>
<sequence length="246" mass="28241">MKYDIIGDIHGCLQEFQNLTEKLGYNWSSGLPVHPDQRKLAFVGDITDRGPHSLRMIEIVWELVIHKKEAYYAPGNHCNKLYRFFLGRNVTVAHGLETTVAEYEALPSHKQNMIKEKFITLYEQSPLYHVLDEKRLLVCHAGIRQDYIGRQDKKVQTFVLYGDITGEKHADGSPVRRDWAKEYKGTAWIVYGHTPVKEPRFVNHTVNIDTGAVFGGRLTALRYPEMETVSVPSSLPFVPEKFRPIS</sequence>
<comment type="function">
    <text evidence="1">Asymmetrically hydrolyzes Ap4p to yield AMP and ATP.</text>
</comment>
<comment type="catalytic activity">
    <reaction evidence="1">
        <text>P(1),P(4)-bis(5'-guanosyl) tetraphosphate + H2O = GMP + GTP + 2 H(+)</text>
        <dbReference type="Rhea" id="RHEA:22484"/>
        <dbReference type="ChEBI" id="CHEBI:15377"/>
        <dbReference type="ChEBI" id="CHEBI:15378"/>
        <dbReference type="ChEBI" id="CHEBI:37565"/>
        <dbReference type="ChEBI" id="CHEBI:57553"/>
        <dbReference type="ChEBI" id="CHEBI:58115"/>
        <dbReference type="EC" id="3.6.1.17"/>
    </reaction>
</comment>
<comment type="cofactor">
    <cofactor evidence="1">
        <name>Ni(2+)</name>
        <dbReference type="ChEBI" id="CHEBI:49786"/>
    </cofactor>
</comment>
<comment type="similarity">
    <text evidence="1">Belongs to the PrpE family.</text>
</comment>
<dbReference type="EC" id="3.6.1.17" evidence="1"/>
<dbReference type="EMBL" id="CP000485">
    <property type="protein sequence ID" value="ABK84425.1"/>
    <property type="molecule type" value="Genomic_DNA"/>
</dbReference>
<dbReference type="RefSeq" id="WP_000872717.1">
    <property type="nucleotide sequence ID" value="NC_008600.1"/>
</dbReference>
<dbReference type="SMR" id="A0RB32"/>
<dbReference type="KEGG" id="btl:BALH_1064"/>
<dbReference type="HOGENOM" id="CLU_023125_3_0_9"/>
<dbReference type="GO" id="GO:0005737">
    <property type="term" value="C:cytoplasm"/>
    <property type="evidence" value="ECO:0007669"/>
    <property type="project" value="TreeGrafter"/>
</dbReference>
<dbReference type="GO" id="GO:0004081">
    <property type="term" value="F:bis(5'-nucleosyl)-tetraphosphatase (asymmetrical) activity"/>
    <property type="evidence" value="ECO:0007669"/>
    <property type="project" value="UniProtKB-UniRule"/>
</dbReference>
<dbReference type="GO" id="GO:0005525">
    <property type="term" value="F:GTP binding"/>
    <property type="evidence" value="ECO:0007669"/>
    <property type="project" value="UniProtKB-KW"/>
</dbReference>
<dbReference type="GO" id="GO:0016151">
    <property type="term" value="F:nickel cation binding"/>
    <property type="evidence" value="ECO:0007669"/>
    <property type="project" value="UniProtKB-UniRule"/>
</dbReference>
<dbReference type="GO" id="GO:0016791">
    <property type="term" value="F:phosphatase activity"/>
    <property type="evidence" value="ECO:0007669"/>
    <property type="project" value="TreeGrafter"/>
</dbReference>
<dbReference type="CDD" id="cd07423">
    <property type="entry name" value="MPP_Prp_like"/>
    <property type="match status" value="1"/>
</dbReference>
<dbReference type="Gene3D" id="3.60.21.10">
    <property type="match status" value="1"/>
</dbReference>
<dbReference type="HAMAP" id="MF_01443">
    <property type="entry name" value="PrpE"/>
    <property type="match status" value="1"/>
</dbReference>
<dbReference type="InterPro" id="IPR050126">
    <property type="entry name" value="Ap4A_hydrolase"/>
</dbReference>
<dbReference type="InterPro" id="IPR023937">
    <property type="entry name" value="Bis(5'-nucleosyl)-tetraP_PrpE"/>
</dbReference>
<dbReference type="InterPro" id="IPR004843">
    <property type="entry name" value="Calcineurin-like_PHP_ApaH"/>
</dbReference>
<dbReference type="InterPro" id="IPR029052">
    <property type="entry name" value="Metallo-depent_PP-like"/>
</dbReference>
<dbReference type="InterPro" id="IPR041780">
    <property type="entry name" value="MPP_PrpE-like"/>
</dbReference>
<dbReference type="NCBIfam" id="NF010148">
    <property type="entry name" value="PRK13625.1"/>
    <property type="match status" value="1"/>
</dbReference>
<dbReference type="PANTHER" id="PTHR42850:SF7">
    <property type="entry name" value="BIS(5'-NUCLEOSYL)-TETRAPHOSPHATASE PRPE [ASYMMETRICAL]"/>
    <property type="match status" value="1"/>
</dbReference>
<dbReference type="PANTHER" id="PTHR42850">
    <property type="entry name" value="METALLOPHOSPHOESTERASE"/>
    <property type="match status" value="1"/>
</dbReference>
<dbReference type="Pfam" id="PF00149">
    <property type="entry name" value="Metallophos"/>
    <property type="match status" value="1"/>
</dbReference>
<dbReference type="SUPFAM" id="SSF56300">
    <property type="entry name" value="Metallo-dependent phosphatases"/>
    <property type="match status" value="1"/>
</dbReference>
<proteinExistence type="inferred from homology"/>
<feature type="chain" id="PRO_0000297701" description="Bis(5'-nucleosyl)-tetraphosphatase PrpE [asymmetrical]">
    <location>
        <begin position="1"/>
        <end position="246"/>
    </location>
</feature>
<reference key="1">
    <citation type="journal article" date="2007" name="J. Bacteriol.">
        <title>The complete genome sequence of Bacillus thuringiensis Al Hakam.</title>
        <authorList>
            <person name="Challacombe J.F."/>
            <person name="Altherr M.R."/>
            <person name="Xie G."/>
            <person name="Bhotika S.S."/>
            <person name="Brown N."/>
            <person name="Bruce D."/>
            <person name="Campbell C.S."/>
            <person name="Campbell M.L."/>
            <person name="Chen J."/>
            <person name="Chertkov O."/>
            <person name="Cleland C."/>
            <person name="Dimitrijevic M."/>
            <person name="Doggett N.A."/>
            <person name="Fawcett J.J."/>
            <person name="Glavina T."/>
            <person name="Goodwin L.A."/>
            <person name="Green L.D."/>
            <person name="Han C.S."/>
            <person name="Hill K.K."/>
            <person name="Hitchcock P."/>
            <person name="Jackson P.J."/>
            <person name="Keim P."/>
            <person name="Kewalramani A.R."/>
            <person name="Longmire J."/>
            <person name="Lucas S."/>
            <person name="Malfatti S."/>
            <person name="Martinez D."/>
            <person name="McMurry K."/>
            <person name="Meincke L.J."/>
            <person name="Misra M."/>
            <person name="Moseman B.L."/>
            <person name="Mundt M."/>
            <person name="Munk A.C."/>
            <person name="Okinaka R.T."/>
            <person name="Parson-Quintana B."/>
            <person name="Reilly L.P."/>
            <person name="Richardson P."/>
            <person name="Robinson D.L."/>
            <person name="Saunders E."/>
            <person name="Tapia R."/>
            <person name="Tesmer J.G."/>
            <person name="Thayer N."/>
            <person name="Thompson L.S."/>
            <person name="Tice H."/>
            <person name="Ticknor L.O."/>
            <person name="Wills P.L."/>
            <person name="Gilna P."/>
            <person name="Brettin T.S."/>
        </authorList>
    </citation>
    <scope>NUCLEOTIDE SEQUENCE [LARGE SCALE GENOMIC DNA]</scope>
    <source>
        <strain>Al Hakam</strain>
    </source>
</reference>
<organism>
    <name type="scientific">Bacillus thuringiensis (strain Al Hakam)</name>
    <dbReference type="NCBI Taxonomy" id="412694"/>
    <lineage>
        <taxon>Bacteria</taxon>
        <taxon>Bacillati</taxon>
        <taxon>Bacillota</taxon>
        <taxon>Bacilli</taxon>
        <taxon>Bacillales</taxon>
        <taxon>Bacillaceae</taxon>
        <taxon>Bacillus</taxon>
        <taxon>Bacillus cereus group</taxon>
    </lineage>
</organism>
<name>PRPE_BACAH</name>
<gene>
    <name evidence="1" type="primary">prpE</name>
    <name type="ordered locus">BALH_1064</name>
</gene>
<accession>A0RB32</accession>
<keyword id="KW-0342">GTP-binding</keyword>
<keyword id="KW-0378">Hydrolase</keyword>
<keyword id="KW-0533">Nickel</keyword>
<keyword id="KW-0547">Nucleotide-binding</keyword>